<comment type="function">
    <text evidence="1">Potential calcium sensor.</text>
</comment>
<comment type="caution">
    <text evidence="3">Although assigned as a calmodulin family member by Ref.3, it only contains EF-hand domains.</text>
</comment>
<sequence length="146" mass="16320">MSVAEIFERVDKNKDGKISWDEFAEAIRAFSPSITSEEIDNMFREIDVDGDNQIDVAEYASCLMLGGEGNKEDEDIVMKEAFDLYDIDGDGKISASEIHVVLKRLGEKQTIAECIAMVRAVDADGDGFVSFEEFKTMMSCNNKKLQ</sequence>
<gene>
    <name type="primary">CML32</name>
    <name type="ordered locus">At5g17470</name>
    <name type="ORF">K3M16.40</name>
</gene>
<keyword id="KW-0106">Calcium</keyword>
<keyword id="KW-0479">Metal-binding</keyword>
<keyword id="KW-1185">Reference proteome</keyword>
<keyword id="KW-0677">Repeat</keyword>
<name>CML32_ARATH</name>
<proteinExistence type="evidence at transcript level"/>
<organism>
    <name type="scientific">Arabidopsis thaliana</name>
    <name type="common">Mouse-ear cress</name>
    <dbReference type="NCBI Taxonomy" id="3702"/>
    <lineage>
        <taxon>Eukaryota</taxon>
        <taxon>Viridiplantae</taxon>
        <taxon>Streptophyta</taxon>
        <taxon>Embryophyta</taxon>
        <taxon>Tracheophyta</taxon>
        <taxon>Spermatophyta</taxon>
        <taxon>Magnoliopsida</taxon>
        <taxon>eudicotyledons</taxon>
        <taxon>Gunneridae</taxon>
        <taxon>Pentapetalae</taxon>
        <taxon>rosids</taxon>
        <taxon>malvids</taxon>
        <taxon>Brassicales</taxon>
        <taxon>Brassicaceae</taxon>
        <taxon>Camelineae</taxon>
        <taxon>Arabidopsis</taxon>
    </lineage>
</organism>
<protein>
    <recommendedName>
        <fullName>Probable calcium-binding protein CML32</fullName>
    </recommendedName>
    <alternativeName>
        <fullName>Calmodulin-like protein 32</fullName>
    </alternativeName>
</protein>
<accession>Q9LF55</accession>
<evidence type="ECO:0000250" key="1"/>
<evidence type="ECO:0000255" key="2">
    <source>
        <dbReference type="PROSITE-ProRule" id="PRU00448"/>
    </source>
</evidence>
<evidence type="ECO:0000305" key="3"/>
<dbReference type="EMBL" id="AL391150">
    <property type="protein sequence ID" value="CAC01891.1"/>
    <property type="molecule type" value="Genomic_DNA"/>
</dbReference>
<dbReference type="EMBL" id="CP002688">
    <property type="protein sequence ID" value="AED92431.1"/>
    <property type="molecule type" value="Genomic_DNA"/>
</dbReference>
<dbReference type="PIR" id="T51473">
    <property type="entry name" value="T51473"/>
</dbReference>
<dbReference type="RefSeq" id="NP_197249.1">
    <property type="nucleotide sequence ID" value="NM_121753.2"/>
</dbReference>
<dbReference type="SMR" id="Q9LF55"/>
<dbReference type="FunCoup" id="Q9LF55">
    <property type="interactions" value="255"/>
</dbReference>
<dbReference type="STRING" id="3702.Q9LF55"/>
<dbReference type="PaxDb" id="3702-AT5G17470.1"/>
<dbReference type="ProteomicsDB" id="241047"/>
<dbReference type="EnsemblPlants" id="AT5G17470.1">
    <property type="protein sequence ID" value="AT5G17470.1"/>
    <property type="gene ID" value="AT5G17470"/>
</dbReference>
<dbReference type="GeneID" id="831613"/>
<dbReference type="Gramene" id="AT5G17470.1">
    <property type="protein sequence ID" value="AT5G17470.1"/>
    <property type="gene ID" value="AT5G17470"/>
</dbReference>
<dbReference type="KEGG" id="ath:AT5G17470"/>
<dbReference type="Araport" id="AT5G17470"/>
<dbReference type="TAIR" id="AT5G17470"/>
<dbReference type="eggNOG" id="KOG0027">
    <property type="taxonomic scope" value="Eukaryota"/>
</dbReference>
<dbReference type="HOGENOM" id="CLU_061288_20_7_1"/>
<dbReference type="InParanoid" id="Q9LF55"/>
<dbReference type="OMA" id="TMMNSDN"/>
<dbReference type="PhylomeDB" id="Q9LF55"/>
<dbReference type="PRO" id="PR:Q9LF55"/>
<dbReference type="Proteomes" id="UP000006548">
    <property type="component" value="Chromosome 5"/>
</dbReference>
<dbReference type="ExpressionAtlas" id="Q9LF55">
    <property type="expression patterns" value="baseline and differential"/>
</dbReference>
<dbReference type="GO" id="GO:0005509">
    <property type="term" value="F:calcium ion binding"/>
    <property type="evidence" value="ECO:0007669"/>
    <property type="project" value="InterPro"/>
</dbReference>
<dbReference type="CDD" id="cd00051">
    <property type="entry name" value="EFh"/>
    <property type="match status" value="2"/>
</dbReference>
<dbReference type="FunFam" id="1.10.238.10:FF:000353">
    <property type="entry name" value="Probable calcium-binding protein CML31"/>
    <property type="match status" value="1"/>
</dbReference>
<dbReference type="FunFam" id="1.10.238.10:FF:000505">
    <property type="entry name" value="Probable calcium-binding protein CML34"/>
    <property type="match status" value="1"/>
</dbReference>
<dbReference type="Gene3D" id="1.10.238.10">
    <property type="entry name" value="EF-hand"/>
    <property type="match status" value="2"/>
</dbReference>
<dbReference type="InterPro" id="IPR011992">
    <property type="entry name" value="EF-hand-dom_pair"/>
</dbReference>
<dbReference type="InterPro" id="IPR018247">
    <property type="entry name" value="EF_Hand_1_Ca_BS"/>
</dbReference>
<dbReference type="InterPro" id="IPR002048">
    <property type="entry name" value="EF_hand_dom"/>
</dbReference>
<dbReference type="InterPro" id="IPR039647">
    <property type="entry name" value="EF_hand_pair_protein_CML-like"/>
</dbReference>
<dbReference type="PANTHER" id="PTHR10891">
    <property type="entry name" value="EF-HAND CALCIUM-BINDING DOMAIN CONTAINING PROTEIN"/>
    <property type="match status" value="1"/>
</dbReference>
<dbReference type="Pfam" id="PF13499">
    <property type="entry name" value="EF-hand_7"/>
    <property type="match status" value="2"/>
</dbReference>
<dbReference type="SMART" id="SM00054">
    <property type="entry name" value="EFh"/>
    <property type="match status" value="4"/>
</dbReference>
<dbReference type="SUPFAM" id="SSF47473">
    <property type="entry name" value="EF-hand"/>
    <property type="match status" value="1"/>
</dbReference>
<dbReference type="PROSITE" id="PS00018">
    <property type="entry name" value="EF_HAND_1"/>
    <property type="match status" value="4"/>
</dbReference>
<dbReference type="PROSITE" id="PS50222">
    <property type="entry name" value="EF_HAND_2"/>
    <property type="match status" value="4"/>
</dbReference>
<reference key="1">
    <citation type="journal article" date="2000" name="Nature">
        <title>Sequence and analysis of chromosome 5 of the plant Arabidopsis thaliana.</title>
        <authorList>
            <person name="Tabata S."/>
            <person name="Kaneko T."/>
            <person name="Nakamura Y."/>
            <person name="Kotani H."/>
            <person name="Kato T."/>
            <person name="Asamizu E."/>
            <person name="Miyajima N."/>
            <person name="Sasamoto S."/>
            <person name="Kimura T."/>
            <person name="Hosouchi T."/>
            <person name="Kawashima K."/>
            <person name="Kohara M."/>
            <person name="Matsumoto M."/>
            <person name="Matsuno A."/>
            <person name="Muraki A."/>
            <person name="Nakayama S."/>
            <person name="Nakazaki N."/>
            <person name="Naruo K."/>
            <person name="Okumura S."/>
            <person name="Shinpo S."/>
            <person name="Takeuchi C."/>
            <person name="Wada T."/>
            <person name="Watanabe A."/>
            <person name="Yamada M."/>
            <person name="Yasuda M."/>
            <person name="Sato S."/>
            <person name="de la Bastide M."/>
            <person name="Huang E."/>
            <person name="Spiegel L."/>
            <person name="Gnoj L."/>
            <person name="O'Shaughnessy A."/>
            <person name="Preston R."/>
            <person name="Habermann K."/>
            <person name="Murray J."/>
            <person name="Johnson D."/>
            <person name="Rohlfing T."/>
            <person name="Nelson J."/>
            <person name="Stoneking T."/>
            <person name="Pepin K."/>
            <person name="Spieth J."/>
            <person name="Sekhon M."/>
            <person name="Armstrong J."/>
            <person name="Becker M."/>
            <person name="Belter E."/>
            <person name="Cordum H."/>
            <person name="Cordes M."/>
            <person name="Courtney L."/>
            <person name="Courtney W."/>
            <person name="Dante M."/>
            <person name="Du H."/>
            <person name="Edwards J."/>
            <person name="Fryman J."/>
            <person name="Haakensen B."/>
            <person name="Lamar E."/>
            <person name="Latreille P."/>
            <person name="Leonard S."/>
            <person name="Meyer R."/>
            <person name="Mulvaney E."/>
            <person name="Ozersky P."/>
            <person name="Riley A."/>
            <person name="Strowmatt C."/>
            <person name="Wagner-McPherson C."/>
            <person name="Wollam A."/>
            <person name="Yoakum M."/>
            <person name="Bell M."/>
            <person name="Dedhia N."/>
            <person name="Parnell L."/>
            <person name="Shah R."/>
            <person name="Rodriguez M."/>
            <person name="Hoon See L."/>
            <person name="Vil D."/>
            <person name="Baker J."/>
            <person name="Kirchoff K."/>
            <person name="Toth K."/>
            <person name="King L."/>
            <person name="Bahret A."/>
            <person name="Miller B."/>
            <person name="Marra M.A."/>
            <person name="Martienssen R."/>
            <person name="McCombie W.R."/>
            <person name="Wilson R.K."/>
            <person name="Murphy G."/>
            <person name="Bancroft I."/>
            <person name="Volckaert G."/>
            <person name="Wambutt R."/>
            <person name="Duesterhoeft A."/>
            <person name="Stiekema W."/>
            <person name="Pohl T."/>
            <person name="Entian K.-D."/>
            <person name="Terryn N."/>
            <person name="Hartley N."/>
            <person name="Bent E."/>
            <person name="Johnson S."/>
            <person name="Langham S.-A."/>
            <person name="McCullagh B."/>
            <person name="Robben J."/>
            <person name="Grymonprez B."/>
            <person name="Zimmermann W."/>
            <person name="Ramsperger U."/>
            <person name="Wedler H."/>
            <person name="Balke K."/>
            <person name="Wedler E."/>
            <person name="Peters S."/>
            <person name="van Staveren M."/>
            <person name="Dirkse W."/>
            <person name="Mooijman P."/>
            <person name="Klein Lankhorst R."/>
            <person name="Weitzenegger T."/>
            <person name="Bothe G."/>
            <person name="Rose M."/>
            <person name="Hauf J."/>
            <person name="Berneiser S."/>
            <person name="Hempel S."/>
            <person name="Feldpausch M."/>
            <person name="Lamberth S."/>
            <person name="Villarroel R."/>
            <person name="Gielen J."/>
            <person name="Ardiles W."/>
            <person name="Bents O."/>
            <person name="Lemcke K."/>
            <person name="Kolesov G."/>
            <person name="Mayer K.F.X."/>
            <person name="Rudd S."/>
            <person name="Schoof H."/>
            <person name="Schueller C."/>
            <person name="Zaccaria P."/>
            <person name="Mewes H.-W."/>
            <person name="Bevan M."/>
            <person name="Fransz P.F."/>
        </authorList>
    </citation>
    <scope>NUCLEOTIDE SEQUENCE [LARGE SCALE GENOMIC DNA]</scope>
    <source>
        <strain>cv. Columbia</strain>
    </source>
</reference>
<reference key="2">
    <citation type="journal article" date="2017" name="Plant J.">
        <title>Araport11: a complete reannotation of the Arabidopsis thaliana reference genome.</title>
        <authorList>
            <person name="Cheng C.Y."/>
            <person name="Krishnakumar V."/>
            <person name="Chan A.P."/>
            <person name="Thibaud-Nissen F."/>
            <person name="Schobel S."/>
            <person name="Town C.D."/>
        </authorList>
    </citation>
    <scope>GENOME REANNOTATION</scope>
    <source>
        <strain>cv. Columbia</strain>
    </source>
</reference>
<reference key="3">
    <citation type="journal article" date="2003" name="New Phytol.">
        <title>Calmodulins and related potential calcium sensors of Arabidopsis.</title>
        <authorList>
            <person name="McCormack E."/>
            <person name="Braam J."/>
        </authorList>
    </citation>
    <scope>GENE FAMILY</scope>
    <scope>NOMENCLATURE</scope>
</reference>
<feature type="chain" id="PRO_0000342958" description="Probable calcium-binding protein CML32">
    <location>
        <begin position="1"/>
        <end position="146"/>
    </location>
</feature>
<feature type="domain" description="EF-hand 1" evidence="2">
    <location>
        <begin position="1"/>
        <end position="33"/>
    </location>
</feature>
<feature type="domain" description="EF-hand 2" evidence="2">
    <location>
        <begin position="34"/>
        <end position="69"/>
    </location>
</feature>
<feature type="domain" description="EF-hand 3" evidence="2">
    <location>
        <begin position="73"/>
        <end position="108"/>
    </location>
</feature>
<feature type="domain" description="EF-hand 4" evidence="2">
    <location>
        <begin position="109"/>
        <end position="144"/>
    </location>
</feature>
<feature type="binding site" evidence="2">
    <location>
        <position position="11"/>
    </location>
    <ligand>
        <name>Ca(2+)</name>
        <dbReference type="ChEBI" id="CHEBI:29108"/>
        <label>1</label>
    </ligand>
</feature>
<feature type="binding site" evidence="2">
    <location>
        <position position="13"/>
    </location>
    <ligand>
        <name>Ca(2+)</name>
        <dbReference type="ChEBI" id="CHEBI:29108"/>
        <label>1</label>
    </ligand>
</feature>
<feature type="binding site" evidence="2">
    <location>
        <position position="15"/>
    </location>
    <ligand>
        <name>Ca(2+)</name>
        <dbReference type="ChEBI" id="CHEBI:29108"/>
        <label>1</label>
    </ligand>
</feature>
<feature type="binding site" evidence="2">
    <location>
        <position position="17"/>
    </location>
    <ligand>
        <name>Ca(2+)</name>
        <dbReference type="ChEBI" id="CHEBI:29108"/>
        <label>1</label>
    </ligand>
</feature>
<feature type="binding site" evidence="2">
    <location>
        <position position="22"/>
    </location>
    <ligand>
        <name>Ca(2+)</name>
        <dbReference type="ChEBI" id="CHEBI:29108"/>
        <label>1</label>
    </ligand>
</feature>
<feature type="binding site" evidence="2">
    <location>
        <position position="47"/>
    </location>
    <ligand>
        <name>Ca(2+)</name>
        <dbReference type="ChEBI" id="CHEBI:29108"/>
        <label>2</label>
    </ligand>
</feature>
<feature type="binding site" evidence="2">
    <location>
        <position position="49"/>
    </location>
    <ligand>
        <name>Ca(2+)</name>
        <dbReference type="ChEBI" id="CHEBI:29108"/>
        <label>2</label>
    </ligand>
</feature>
<feature type="binding site" evidence="2">
    <location>
        <position position="51"/>
    </location>
    <ligand>
        <name>Ca(2+)</name>
        <dbReference type="ChEBI" id="CHEBI:29108"/>
        <label>2</label>
    </ligand>
</feature>
<feature type="binding site" evidence="2">
    <location>
        <position position="53"/>
    </location>
    <ligand>
        <name>Ca(2+)</name>
        <dbReference type="ChEBI" id="CHEBI:29108"/>
        <label>2</label>
    </ligand>
</feature>
<feature type="binding site" evidence="2">
    <location>
        <position position="58"/>
    </location>
    <ligand>
        <name>Ca(2+)</name>
        <dbReference type="ChEBI" id="CHEBI:29108"/>
        <label>2</label>
    </ligand>
</feature>
<feature type="binding site" evidence="2">
    <location>
        <position position="86"/>
    </location>
    <ligand>
        <name>Ca(2+)</name>
        <dbReference type="ChEBI" id="CHEBI:29108"/>
        <label>3</label>
    </ligand>
</feature>
<feature type="binding site" evidence="2">
    <location>
        <position position="88"/>
    </location>
    <ligand>
        <name>Ca(2+)</name>
        <dbReference type="ChEBI" id="CHEBI:29108"/>
        <label>3</label>
    </ligand>
</feature>
<feature type="binding site" evidence="2">
    <location>
        <position position="90"/>
    </location>
    <ligand>
        <name>Ca(2+)</name>
        <dbReference type="ChEBI" id="CHEBI:29108"/>
        <label>3</label>
    </ligand>
</feature>
<feature type="binding site" evidence="2">
    <location>
        <position position="92"/>
    </location>
    <ligand>
        <name>Ca(2+)</name>
        <dbReference type="ChEBI" id="CHEBI:29108"/>
        <label>3</label>
    </ligand>
</feature>
<feature type="binding site" evidence="2">
    <location>
        <position position="97"/>
    </location>
    <ligand>
        <name>Ca(2+)</name>
        <dbReference type="ChEBI" id="CHEBI:29108"/>
        <label>3</label>
    </ligand>
</feature>
<feature type="binding site" evidence="2">
    <location>
        <position position="122"/>
    </location>
    <ligand>
        <name>Ca(2+)</name>
        <dbReference type="ChEBI" id="CHEBI:29108"/>
        <label>4</label>
    </ligand>
</feature>
<feature type="binding site" evidence="2">
    <location>
        <position position="124"/>
    </location>
    <ligand>
        <name>Ca(2+)</name>
        <dbReference type="ChEBI" id="CHEBI:29108"/>
        <label>4</label>
    </ligand>
</feature>
<feature type="binding site" evidence="2">
    <location>
        <position position="126"/>
    </location>
    <ligand>
        <name>Ca(2+)</name>
        <dbReference type="ChEBI" id="CHEBI:29108"/>
        <label>4</label>
    </ligand>
</feature>
<feature type="binding site" evidence="2">
    <location>
        <position position="133"/>
    </location>
    <ligand>
        <name>Ca(2+)</name>
        <dbReference type="ChEBI" id="CHEBI:29108"/>
        <label>4</label>
    </ligand>
</feature>